<name>DRRA2_STRC4</name>
<accession>P0DXU5</accession>
<evidence type="ECO:0000250" key="1">
    <source>
        <dbReference type="UniProtKB" id="P32010"/>
    </source>
</evidence>
<evidence type="ECO:0000255" key="2">
    <source>
        <dbReference type="PROSITE-ProRule" id="PRU00434"/>
    </source>
</evidence>
<evidence type="ECO:0000269" key="3">
    <source>
    </source>
</evidence>
<evidence type="ECO:0000269" key="4">
    <source ref="1"/>
</evidence>
<evidence type="ECO:0000303" key="5">
    <source>
    </source>
</evidence>
<evidence type="ECO:0000305" key="6"/>
<evidence type="ECO:0000305" key="7">
    <source>
    </source>
</evidence>
<evidence type="ECO:0000312" key="8">
    <source>
        <dbReference type="EMBL" id="WOT35541.1"/>
    </source>
</evidence>
<keyword id="KW-0046">Antibiotic resistance</keyword>
<keyword id="KW-0067">ATP-binding</keyword>
<keyword id="KW-1003">Cell membrane</keyword>
<keyword id="KW-0472">Membrane</keyword>
<keyword id="KW-0547">Nucleotide-binding</keyword>
<keyword id="KW-1278">Translocase</keyword>
<keyword id="KW-0813">Transport</keyword>
<protein>
    <recommendedName>
        <fullName evidence="6">Daunorubicin resistance ATP-binding protein DrrA2</fullName>
        <ecNumber evidence="7">7.6.2.2</ecNumber>
    </recommendedName>
</protein>
<reference key="1">
    <citation type="submission" date="2023-10" db="EMBL/GenBank/DDBJ databases">
        <authorList>
            <person name="Guan W."/>
        </authorList>
    </citation>
    <scope>NUCLEOTIDE SEQUENCE [LARGE SCALE GENOMIC DNA]</scope>
    <source>
        <strain>CICC 11043</strain>
    </source>
</reference>
<reference key="2">
    <citation type="journal article" date="2024" name="Microb. Biotechnol.">
        <title>The involvement of multiple ABC transporters in daunorubicin efflux in Streptomyces coeruleorubidus.</title>
        <authorList>
            <person name="Dong J."/>
            <person name="Ning J."/>
            <person name="Tian Y."/>
            <person name="Li H."/>
            <person name="Chen H."/>
            <person name="Guan W."/>
        </authorList>
    </citation>
    <scope>FUNCTION IN DAUNORUBICIN EFFLUX</scope>
    <scope>INDUCTION</scope>
    <scope>DISRUPTION PHENOTYPE</scope>
</reference>
<dbReference type="EC" id="7.6.2.2" evidence="7"/>
<dbReference type="EMBL" id="CP137524">
    <property type="protein sequence ID" value="WOT35541.1"/>
    <property type="molecule type" value="Genomic_DNA"/>
</dbReference>
<dbReference type="RefSeq" id="WP_193504930.1">
    <property type="nucleotide sequence ID" value="NZ_BMSO01000006.1"/>
</dbReference>
<dbReference type="GO" id="GO:0005886">
    <property type="term" value="C:plasma membrane"/>
    <property type="evidence" value="ECO:0007669"/>
    <property type="project" value="UniProtKB-SubCell"/>
</dbReference>
<dbReference type="GO" id="GO:0005524">
    <property type="term" value="F:ATP binding"/>
    <property type="evidence" value="ECO:0007669"/>
    <property type="project" value="UniProtKB-KW"/>
</dbReference>
<dbReference type="GO" id="GO:0016887">
    <property type="term" value="F:ATP hydrolysis activity"/>
    <property type="evidence" value="ECO:0007669"/>
    <property type="project" value="InterPro"/>
</dbReference>
<dbReference type="GO" id="GO:0043215">
    <property type="term" value="P:daunorubicin transport"/>
    <property type="evidence" value="ECO:0007669"/>
    <property type="project" value="InterPro"/>
</dbReference>
<dbReference type="GO" id="GO:1900753">
    <property type="term" value="P:doxorubicin transport"/>
    <property type="evidence" value="ECO:0007669"/>
    <property type="project" value="InterPro"/>
</dbReference>
<dbReference type="GO" id="GO:0046677">
    <property type="term" value="P:response to antibiotic"/>
    <property type="evidence" value="ECO:0007669"/>
    <property type="project" value="UniProtKB-KW"/>
</dbReference>
<dbReference type="FunFam" id="3.40.50.300:FF:000589">
    <property type="entry name" value="ABC transporter, ATP-binding subunit"/>
    <property type="match status" value="1"/>
</dbReference>
<dbReference type="Gene3D" id="3.40.50.300">
    <property type="entry name" value="P-loop containing nucleotide triphosphate hydrolases"/>
    <property type="match status" value="1"/>
</dbReference>
<dbReference type="InterPro" id="IPR003593">
    <property type="entry name" value="AAA+_ATPase"/>
</dbReference>
<dbReference type="InterPro" id="IPR003439">
    <property type="entry name" value="ABC_transporter-like_ATP-bd"/>
</dbReference>
<dbReference type="InterPro" id="IPR017871">
    <property type="entry name" value="ABC_transporter-like_CS"/>
</dbReference>
<dbReference type="InterPro" id="IPR050763">
    <property type="entry name" value="ABC_transporter_ATP-binding"/>
</dbReference>
<dbReference type="InterPro" id="IPR005894">
    <property type="entry name" value="DrrA"/>
</dbReference>
<dbReference type="InterPro" id="IPR025302">
    <property type="entry name" value="DrrA1-3-like_C"/>
</dbReference>
<dbReference type="InterPro" id="IPR027417">
    <property type="entry name" value="P-loop_NTPase"/>
</dbReference>
<dbReference type="NCBIfam" id="TIGR01188">
    <property type="entry name" value="drrA"/>
    <property type="match status" value="1"/>
</dbReference>
<dbReference type="PANTHER" id="PTHR42711">
    <property type="entry name" value="ABC TRANSPORTER ATP-BINDING PROTEIN"/>
    <property type="match status" value="1"/>
</dbReference>
<dbReference type="PANTHER" id="PTHR42711:SF19">
    <property type="entry name" value="DOXORUBICIN RESISTANCE ATP-BINDING PROTEIN DRRA"/>
    <property type="match status" value="1"/>
</dbReference>
<dbReference type="Pfam" id="PF00005">
    <property type="entry name" value="ABC_tran"/>
    <property type="match status" value="1"/>
</dbReference>
<dbReference type="Pfam" id="PF13732">
    <property type="entry name" value="DrrA1-3_C"/>
    <property type="match status" value="1"/>
</dbReference>
<dbReference type="SMART" id="SM00382">
    <property type="entry name" value="AAA"/>
    <property type="match status" value="1"/>
</dbReference>
<dbReference type="SUPFAM" id="SSF52540">
    <property type="entry name" value="P-loop containing nucleoside triphosphate hydrolases"/>
    <property type="match status" value="1"/>
</dbReference>
<dbReference type="PROSITE" id="PS00211">
    <property type="entry name" value="ABC_TRANSPORTER_1"/>
    <property type="match status" value="1"/>
</dbReference>
<dbReference type="PROSITE" id="PS50893">
    <property type="entry name" value="ABC_TRANSPORTER_2"/>
    <property type="match status" value="1"/>
</dbReference>
<sequence>MDGYAVRAEAMEKRYGEKRALDGFDLAVGEGTVHGLLGPNGAGKTTAVRILSTLVRLDGGRATVAGLDVARQPREVRARIGLTGQYAAVDEVLTGRQNLEMFGRLFHLGGRRARLRATELLEQFDLTDAGDRGVGKYSGGMRRRLDLAASMILAPAVLFLDEPTTGLDPRSRGEVWESVRALVAGGTTVLLTTQYLEEADKLASRITVIDQGRAIADDTPDGLKNLVGGDRIEVVVAERAEIPRVVKVVARVADGEPEADETESRVHAPVTDRVTALTEVARTLQDEGVRVEDIGLRRPSLDDVFLRLTGHRTENTEAKEAA</sequence>
<gene>
    <name evidence="5" type="primary">drrA2</name>
    <name evidence="8" type="ORF">R5U08_15995</name>
</gene>
<proteinExistence type="evidence at protein level"/>
<organism>
    <name type="scientific">Streptomyces coeruleorubidus</name>
    <dbReference type="NCBI Taxonomy" id="116188"/>
    <lineage>
        <taxon>Bacteria</taxon>
        <taxon>Bacillati</taxon>
        <taxon>Actinomycetota</taxon>
        <taxon>Actinomycetes</taxon>
        <taxon>Kitasatosporales</taxon>
        <taxon>Streptomycetaceae</taxon>
        <taxon>Streptomyces</taxon>
    </lineage>
</organism>
<comment type="function">
    <text evidence="3 6">Part of the ABC transporter complex DrrA2B2 involved in daunorubicin efflux (PubMed:39375957). Responsible for energy coupling to the transport system (Probable). Confers self-resistance to daunorubicin, an antibiotic produced by S.coeruleorubidus (PubMed:39375957).</text>
</comment>
<comment type="catalytic activity">
    <reaction evidence="7">
        <text>daunorubicin(in) + ATP + H2O = daunorubicin(out) + ADP + phosphate + H(+)</text>
        <dbReference type="Rhea" id="RHEA:33147"/>
        <dbReference type="ChEBI" id="CHEBI:15377"/>
        <dbReference type="ChEBI" id="CHEBI:15378"/>
        <dbReference type="ChEBI" id="CHEBI:30616"/>
        <dbReference type="ChEBI" id="CHEBI:43474"/>
        <dbReference type="ChEBI" id="CHEBI:64677"/>
        <dbReference type="ChEBI" id="CHEBI:456216"/>
        <dbReference type="EC" id="7.6.2.2"/>
    </reaction>
    <physiologicalReaction direction="left-to-right" evidence="7">
        <dbReference type="Rhea" id="RHEA:33148"/>
    </physiologicalReaction>
</comment>
<comment type="subunit">
    <text evidence="6">The complex is probably composed of two ATP-binding proteins (DrrA2) and two transmembrane proteins (DrrB2).</text>
</comment>
<comment type="subcellular location">
    <subcellularLocation>
        <location evidence="1">Cell membrane</location>
        <topology evidence="1">Peripheral membrane protein</topology>
        <orientation evidence="1">Cytoplasmic side</orientation>
    </subcellularLocation>
</comment>
<comment type="induction">
    <text evidence="4">Expression is repressed by the HTH-type transcriptional repressor DrrR1 in the absence of daunorubicin.</text>
</comment>
<comment type="disruption phenotype">
    <text evidence="3">Deletion of the drrA2-drrB2 operon decreases by 33% the daunorubicin (DNR) titer in cell culture (PubMed:39375957). The drrA2-drrB2 mutant is more sensitive to DNR (PubMed:39375957). Deletion of the drrA1-drrB1, drrA2-drrB2 and drrA3-drrB3 operons almost blocks DNR production in cell culture, suggesting that disruption of these operons impairs the efflux of DNR, resulting in intracellular accumulation (PubMed:39375957).</text>
</comment>
<comment type="similarity">
    <text evidence="6">Belongs to the ABC transporter superfamily. Drug exporter-1 (DrugE1) (TC 3.A.1.105) family.</text>
</comment>
<feature type="chain" id="PRO_0000461852" description="Daunorubicin resistance ATP-binding protein DrrA2">
    <location>
        <begin position="1"/>
        <end position="322"/>
    </location>
</feature>
<feature type="domain" description="ABC transporter" evidence="2">
    <location>
        <begin position="6"/>
        <end position="236"/>
    </location>
</feature>
<feature type="binding site" evidence="2">
    <location>
        <begin position="38"/>
        <end position="45"/>
    </location>
    <ligand>
        <name>ATP</name>
        <dbReference type="ChEBI" id="CHEBI:30616"/>
    </ligand>
</feature>